<accession>P39908</accession>
<sequence length="50" mass="5990">DPVHCKEKKCIFYRSEIAKKMRFFVVKTLKKRKKKCGKNVIDNGIKLNFM</sequence>
<dbReference type="EMBL" id="U06471">
    <property type="protein sequence ID" value="AAC43385.1"/>
    <property type="molecule type" value="Genomic_DNA"/>
</dbReference>
<protein>
    <recommendedName>
        <fullName>Uncharacterized protein in lpsA 5'region</fullName>
    </recommendedName>
    <alternativeName>
        <fullName>ORFA</fullName>
    </alternativeName>
</protein>
<proteinExistence type="predicted"/>
<organism>
    <name type="scientific">Dichelobacter nodosus</name>
    <name type="common">Bacteroides nodosus</name>
    <dbReference type="NCBI Taxonomy" id="870"/>
    <lineage>
        <taxon>Bacteria</taxon>
        <taxon>Pseudomonadati</taxon>
        <taxon>Pseudomonadota</taxon>
        <taxon>Gammaproteobacteria</taxon>
        <taxon>Cardiobacteriales</taxon>
        <taxon>Cardiobacteriaceae</taxon>
        <taxon>Dichelobacter</taxon>
    </lineage>
</organism>
<feature type="chain" id="PRO_0000066297" description="Uncharacterized protein in lpsA 5'region">
    <location>
        <begin position="1" status="less than"/>
        <end position="50"/>
    </location>
</feature>
<feature type="non-terminal residue">
    <location>
        <position position="1"/>
    </location>
</feature>
<name>YLPA_DICNO</name>
<reference key="1">
    <citation type="journal article" date="1995" name="Microbiology">
        <title>A gene region in Dichelobacter nodosus encoding a lipopolysaccharide epitope.</title>
        <authorList>
            <person name="Billington S.J."/>
            <person name="Jost B.H."/>
            <person name="Rood J.I."/>
        </authorList>
    </citation>
    <scope>NUCLEOTIDE SEQUENCE [GENOMIC DNA]</scope>
    <source>
        <strain>A198</strain>
    </source>
</reference>